<protein>
    <recommendedName>
        <fullName evidence="1">Translation initiation factor IF-1 2</fullName>
    </recommendedName>
</protein>
<proteinExistence type="inferred from homology"/>
<gene>
    <name evidence="1" type="primary">infA2</name>
    <name type="ordered locus">Tbd_1463</name>
</gene>
<feature type="chain" id="PRO_0000263893" description="Translation initiation factor IF-1 2">
    <location>
        <begin position="1"/>
        <end position="87"/>
    </location>
</feature>
<feature type="domain" description="S1-like" evidence="1">
    <location>
        <begin position="1"/>
        <end position="72"/>
    </location>
</feature>
<organism>
    <name type="scientific">Thiobacillus denitrificans (strain ATCC 25259 / T1)</name>
    <dbReference type="NCBI Taxonomy" id="292415"/>
    <lineage>
        <taxon>Bacteria</taxon>
        <taxon>Pseudomonadati</taxon>
        <taxon>Pseudomonadota</taxon>
        <taxon>Betaproteobacteria</taxon>
        <taxon>Nitrosomonadales</taxon>
        <taxon>Thiobacillaceae</taxon>
        <taxon>Thiobacillus</taxon>
    </lineage>
</organism>
<sequence length="87" mass="10057">MAKEEVIEMEGVVNEVLPQTRFRVTLDNGFEITAYASGKMRKHRIRILAGDKVTVEMSPYDLTKGRINFRHKDAHQAPRPTVARRYN</sequence>
<name>IF12_THIDA</name>
<evidence type="ECO:0000255" key="1">
    <source>
        <dbReference type="HAMAP-Rule" id="MF_00075"/>
    </source>
</evidence>
<accession>Q3SIV9</accession>
<comment type="function">
    <text evidence="1">One of the essential components for the initiation of protein synthesis. Stabilizes the binding of IF-2 and IF-3 on the 30S subunit to which N-formylmethionyl-tRNA(fMet) subsequently binds. Helps modulate mRNA selection, yielding the 30S pre-initiation complex (PIC). Upon addition of the 50S ribosomal subunit IF-1, IF-2 and IF-3 are released leaving the mature 70S translation initiation complex.</text>
</comment>
<comment type="subunit">
    <text evidence="1">Component of the 30S ribosomal translation pre-initiation complex which assembles on the 30S ribosome in the order IF-2 and IF-3, IF-1 and N-formylmethionyl-tRNA(fMet); mRNA recruitment can occur at any time during PIC assembly.</text>
</comment>
<comment type="subcellular location">
    <subcellularLocation>
        <location evidence="1">Cytoplasm</location>
    </subcellularLocation>
</comment>
<comment type="similarity">
    <text evidence="1">Belongs to the IF-1 family.</text>
</comment>
<reference key="1">
    <citation type="journal article" date="2006" name="J. Bacteriol.">
        <title>The genome sequence of the obligately chemolithoautotrophic, facultatively anaerobic bacterium Thiobacillus denitrificans.</title>
        <authorList>
            <person name="Beller H.R."/>
            <person name="Chain P.S."/>
            <person name="Letain T.E."/>
            <person name="Chakicherla A."/>
            <person name="Larimer F.W."/>
            <person name="Richardson P.M."/>
            <person name="Coleman M.A."/>
            <person name="Wood A.P."/>
            <person name="Kelly D.P."/>
        </authorList>
    </citation>
    <scope>NUCLEOTIDE SEQUENCE [LARGE SCALE GENOMIC DNA]</scope>
    <source>
        <strain>ATCC 25259 / T1</strain>
    </source>
</reference>
<keyword id="KW-0963">Cytoplasm</keyword>
<keyword id="KW-0396">Initiation factor</keyword>
<keyword id="KW-0648">Protein biosynthesis</keyword>
<keyword id="KW-1185">Reference proteome</keyword>
<keyword id="KW-0694">RNA-binding</keyword>
<keyword id="KW-0699">rRNA-binding</keyword>
<dbReference type="EMBL" id="CP000116">
    <property type="protein sequence ID" value="AAZ97416.1"/>
    <property type="molecule type" value="Genomic_DNA"/>
</dbReference>
<dbReference type="RefSeq" id="WP_011311975.1">
    <property type="nucleotide sequence ID" value="NC_007404.1"/>
</dbReference>
<dbReference type="SMR" id="Q3SIV9"/>
<dbReference type="STRING" id="292415.Tbd_1463"/>
<dbReference type="KEGG" id="tbd:Tbd_1463"/>
<dbReference type="eggNOG" id="COG0361">
    <property type="taxonomic scope" value="Bacteria"/>
</dbReference>
<dbReference type="HOGENOM" id="CLU_151267_4_1_4"/>
<dbReference type="OrthoDB" id="9803250at2"/>
<dbReference type="Proteomes" id="UP000008291">
    <property type="component" value="Chromosome"/>
</dbReference>
<dbReference type="GO" id="GO:0005829">
    <property type="term" value="C:cytosol"/>
    <property type="evidence" value="ECO:0007669"/>
    <property type="project" value="TreeGrafter"/>
</dbReference>
<dbReference type="GO" id="GO:0043022">
    <property type="term" value="F:ribosome binding"/>
    <property type="evidence" value="ECO:0007669"/>
    <property type="project" value="UniProtKB-UniRule"/>
</dbReference>
<dbReference type="GO" id="GO:0019843">
    <property type="term" value="F:rRNA binding"/>
    <property type="evidence" value="ECO:0007669"/>
    <property type="project" value="UniProtKB-UniRule"/>
</dbReference>
<dbReference type="GO" id="GO:0003743">
    <property type="term" value="F:translation initiation factor activity"/>
    <property type="evidence" value="ECO:0007669"/>
    <property type="project" value="UniProtKB-UniRule"/>
</dbReference>
<dbReference type="CDD" id="cd04451">
    <property type="entry name" value="S1_IF1"/>
    <property type="match status" value="1"/>
</dbReference>
<dbReference type="FunFam" id="2.40.50.140:FF:000002">
    <property type="entry name" value="Translation initiation factor IF-1"/>
    <property type="match status" value="1"/>
</dbReference>
<dbReference type="Gene3D" id="2.40.50.140">
    <property type="entry name" value="Nucleic acid-binding proteins"/>
    <property type="match status" value="1"/>
</dbReference>
<dbReference type="HAMAP" id="MF_00075">
    <property type="entry name" value="IF_1"/>
    <property type="match status" value="1"/>
</dbReference>
<dbReference type="InterPro" id="IPR012340">
    <property type="entry name" value="NA-bd_OB-fold"/>
</dbReference>
<dbReference type="InterPro" id="IPR006196">
    <property type="entry name" value="RNA-binding_domain_S1_IF1"/>
</dbReference>
<dbReference type="InterPro" id="IPR003029">
    <property type="entry name" value="S1_domain"/>
</dbReference>
<dbReference type="InterPro" id="IPR004368">
    <property type="entry name" value="TIF_IF1"/>
</dbReference>
<dbReference type="NCBIfam" id="TIGR00008">
    <property type="entry name" value="infA"/>
    <property type="match status" value="1"/>
</dbReference>
<dbReference type="PANTHER" id="PTHR33370">
    <property type="entry name" value="TRANSLATION INITIATION FACTOR IF-1, CHLOROPLASTIC"/>
    <property type="match status" value="1"/>
</dbReference>
<dbReference type="PANTHER" id="PTHR33370:SF1">
    <property type="entry name" value="TRANSLATION INITIATION FACTOR IF-1, CHLOROPLASTIC"/>
    <property type="match status" value="1"/>
</dbReference>
<dbReference type="Pfam" id="PF01176">
    <property type="entry name" value="eIF-1a"/>
    <property type="match status" value="1"/>
</dbReference>
<dbReference type="SMART" id="SM00316">
    <property type="entry name" value="S1"/>
    <property type="match status" value="1"/>
</dbReference>
<dbReference type="SUPFAM" id="SSF50249">
    <property type="entry name" value="Nucleic acid-binding proteins"/>
    <property type="match status" value="1"/>
</dbReference>
<dbReference type="PROSITE" id="PS50832">
    <property type="entry name" value="S1_IF1_TYPE"/>
    <property type="match status" value="1"/>
</dbReference>